<organismHost>
    <name type="scientific">Chlorocebus aethiops</name>
    <name type="common">Green monkey</name>
    <name type="synonym">Cercopithecus aethiops</name>
    <dbReference type="NCBI Taxonomy" id="9534"/>
</organismHost>
<organismHost>
    <name type="scientific">Homo sapiens</name>
    <name type="common">Human</name>
    <dbReference type="NCBI Taxonomy" id="9606"/>
</organismHost>
<organismHost>
    <name type="scientific">Rousettus aegyptiacus</name>
    <name type="common">Egyptian fruit bat</name>
    <name type="synonym">Pteropus aegyptiacus</name>
    <dbReference type="NCBI Taxonomy" id="9407"/>
</organismHost>
<name>VGP_MABVR</name>
<gene>
    <name type="primary">GP</name>
</gene>
<proteinExistence type="evidence at protein level"/>
<comment type="function">
    <text evidence="1">GP1 is responsible for binding to the receptor(s) on target cells. Interacts with CD209/DC-SIGN and CLEC4M/DC-SIGNR which act as cofactors for virus entry into the host cell. Binding to CD209 and CLEC4M, which are respectively found on dendritic cells (DCs), and on endothelial cells of liver sinusoids and lymph node sinuses, facilitate infection of macrophages and endothelial cells. These interactions not only facilitate virus cell entry, but also allow capture of viral particles by DCs and subsequent transmission to susceptible cells without DCs infection (trans infection) (By similarity).</text>
</comment>
<comment type="function">
    <text evidence="1">GP2 acts as a class I viral fusion protein. Under the current model, the protein has at least 3 conformational states: pre-fusion native state, pre-hairpin intermediate state, and post-fusion hairpin state. During viral and target cell membrane fusion, the coiled coil regions (heptad repeats) assume a trimer-of-hairpins structure, positioning the fusion peptide in close proximity to the C-terminal region of the ectodomain. The formation of this structure appears to drive apposition and subsequent fusion of viral and target cell membranes. Responsible for penetration of the virus into the cell cytoplasm by mediating the fusion of the membrane of the endocytosed virus particle with the endosomal membrane. Low pH in endosomes induces an irreversible conformational change in GP2, releasing the fusion hydrophobic peptide (By similarity).</text>
</comment>
<comment type="subunit">
    <text evidence="1">Homotrimer; each monomer consists of a GP1 and a GP2 subunit linked by disulfide bonds. The resulting peplomers (GP1,2) protrude from the virus surface as spikes. GP1,2 interacts with human CD209 and CLEC4M (collectively referred to as DC-SIGN(R)). Asialoglycoprotein receptor (ASGP-R) may be a liver-specific receptor for GP1,2. Members of the Tyro3 receptor tyrosine kinase family may be cell entry factors interacting with GP1,2 (By similarity).</text>
</comment>
<comment type="subcellular location">
    <molecule>GP2</molecule>
    <subcellularLocation>
        <location evidence="3">Virion membrane</location>
        <topology evidence="4">Single-pass type I membrane protein</topology>
    </subcellularLocation>
    <subcellularLocation>
        <location evidence="3">Host cell membrane</location>
        <topology evidence="4">Single-pass type I membrane protein</topology>
    </subcellularLocation>
    <text evidence="3">In the cell, localizes to the plasma membrane lipid rafts, which probably represent the assembly and budding site.</text>
</comment>
<comment type="subcellular location">
    <molecule>GP1</molecule>
    <subcellularLocation>
        <location evidence="3">Virion membrane</location>
        <topology evidence="3">Peripheral membrane protein</topology>
    </subcellularLocation>
    <subcellularLocation>
        <location evidence="3">Host cell membrane</location>
        <topology evidence="3">Peripheral membrane protein</topology>
    </subcellularLocation>
    <text evidence="3">GP1 is not anchored to the viral envelope, but forms a disulfid-linked complex with the extravirion surface GP2. In the cell, both GP1 and GP2 localize to the plasma membrane lipid rafts, which probably represent the assembly and budding site. GP1 can also be shed after proteolytic processing.</text>
</comment>
<comment type="domain">
    <text evidence="1">The coiled coil regions play a role in oligomerization and fusion activity.</text>
</comment>
<comment type="domain">
    <text evidence="1">The transmembrane domain is essential and sufficient for recruitment envelope glycoproteins into VP40-enriched multivesicular bodies.</text>
</comment>
<comment type="PTM">
    <text evidence="1">N-glycosylated.</text>
</comment>
<comment type="PTM">
    <text evidence="1">O-glycosylated in the mucin-like region.</text>
</comment>
<comment type="PTM">
    <text evidence="1">Specific enzymatic cleavages in vivo yield mature proteins. The precursor is processed into GP1 and GP2 by host cell furin in the trans Golgi, and maybe by other host proteases, to yield the mature GP1 and GP2 proteins. The cleavage site corresponds to the furin optimal cleavage sequence [KR]-X-[KR]-R (By similarity).</text>
</comment>
<comment type="PTM">
    <text evidence="1">GP1 is phosphorylated on serine residues between residues 260 and 273.</text>
</comment>
<comment type="miscellaneous">
    <text evidence="1">Filoviruses entry requires functional lipid rafts at the host cell surface.</text>
</comment>
<comment type="miscellaneous">
    <text evidence="1">Essential for infectivity, as it is the sole viral protein expressed at the virion surface.</text>
</comment>
<comment type="similarity">
    <text evidence="6">Belongs to the filoviruses glycoprotein family.</text>
</comment>
<protein>
    <recommendedName>
        <fullName>Envelope glycoprotein</fullName>
    </recommendedName>
    <alternativeName>
        <fullName>GP1,2</fullName>
        <shortName>GP</shortName>
    </alternativeName>
    <alternativeName>
        <fullName>Virion spike glycoprotein</fullName>
    </alternativeName>
    <component>
        <recommendedName>
            <fullName>GP1</fullName>
        </recommendedName>
    </component>
    <component>
        <recommendedName>
            <fullName>GP2</fullName>
        </recommendedName>
    </component>
</protein>
<sequence length="681" mass="75458">MKTIYFLISLILIQSIKTLPVLEIASNSQPQDVDSVCSGTLQKTEDVHLMGFTLSGQKVADSPLEASKRWAFRTGVPPKNVEYTEGEEAKTCYNISVTDPSGKSLLLDPPSNIRDYPKCKTVHHIQGQNPHAQGIALHLWGAFFLYDRVASTTMYRGKVFTEGNIAAMIVNKTVHRMIFSRQGQGYRHMNLTSTNKYWTSSNETQRNDTGCFGILQEYNSTNNQTCPPSLKPPSLPTVTPSIHSTNTQINTAKSGTMNPSSDDEDLMISGSGSGEQGPHTTLNVVTEQKQSSTILSTPSLHPSTSQHEQNSTNPSRHAVTEHNGTDPTTQPATLLNNTNTTPTYNTLKYNLSTPSPPTRNITNNDTQRELAESEQTNAQLNTTLDPTENPTTGQDTNSTTNIIMTTSDITSKHPTNSSPDSSPTTRPPIYFRKKRSIFWKEGDIFPFLDGLINTEIDFDPIPNTETIFDESPSFNTSTNEEQHTPPNISLTFSYFPDKNGDTAYSGENENDCDAELRIWSVQEDDLAAGLSWIPFFGPGIEGLYTAGLIKNQNNLVCRLRRLANQTAKSLELLLRVTTEERTFSLINRHAIDFLLTRWGGTCKVLGPDCCIGIEDLSKNISEQIDKIRKDEQKEETGWGLGGKWWTSDWGVLTNLGILLLLSIAVLIALSCICRIFTKYIG</sequence>
<evidence type="ECO:0000250" key="1"/>
<evidence type="ECO:0000250" key="2">
    <source>
        <dbReference type="UniProtKB" id="P35253"/>
    </source>
</evidence>
<evidence type="ECO:0000250" key="3">
    <source>
        <dbReference type="UniProtKB" id="Q05320"/>
    </source>
</evidence>
<evidence type="ECO:0000255" key="4"/>
<evidence type="ECO:0000256" key="5">
    <source>
        <dbReference type="SAM" id="MobiDB-lite"/>
    </source>
</evidence>
<evidence type="ECO:0000305" key="6"/>
<evidence type="ECO:0007829" key="7">
    <source>
        <dbReference type="PDB" id="6BP2"/>
    </source>
</evidence>
<organism>
    <name type="scientific">Lake Victoria marburgvirus (strain Ravn-87)</name>
    <name type="common">MARV</name>
    <name type="synonym">Marburg virus (strain Kenya/Ravn/1987)</name>
    <dbReference type="NCBI Taxonomy" id="378809"/>
    <lineage>
        <taxon>Viruses</taxon>
        <taxon>Riboviria</taxon>
        <taxon>Orthornavirae</taxon>
        <taxon>Negarnaviricota</taxon>
        <taxon>Haploviricotina</taxon>
        <taxon>Monjiviricetes</taxon>
        <taxon>Mononegavirales</taxon>
        <taxon>Filoviridae</taxon>
        <taxon>Orthomarburgvirus</taxon>
        <taxon>Orthomarburgvirus marburgense</taxon>
    </lineage>
</organism>
<feature type="signal peptide" evidence="1">
    <location>
        <begin position="1"/>
        <end position="18"/>
    </location>
</feature>
<feature type="chain" id="PRO_0000314986" description="Envelope glycoprotein" evidence="1">
    <location>
        <begin position="19"/>
        <end position="681"/>
    </location>
</feature>
<feature type="chain" id="PRO_0000314987" description="GP1" evidence="1">
    <location>
        <begin position="33"/>
        <end position="435"/>
    </location>
</feature>
<feature type="chain" id="PRO_0000314988" description="GP2" evidence="1">
    <location>
        <begin position="436"/>
        <end position="681"/>
    </location>
</feature>
<feature type="topological domain" description="Extracellular" evidence="4">
    <location>
        <begin position="19"/>
        <end position="648"/>
    </location>
</feature>
<feature type="transmembrane region" description="Helical" evidence="4">
    <location>
        <begin position="649"/>
        <end position="669"/>
    </location>
</feature>
<feature type="topological domain" description="Cytoplasmic" evidence="4">
    <location>
        <begin position="670"/>
        <end position="681"/>
    </location>
</feature>
<feature type="region of interest" description="Receptor-binding" evidence="1">
    <location>
        <begin position="38"/>
        <end position="188"/>
    </location>
</feature>
<feature type="region of interest" description="Disordered" evidence="5">
    <location>
        <begin position="223"/>
        <end position="428"/>
    </location>
</feature>
<feature type="region of interest" description="Mucin-like region" evidence="1">
    <location>
        <begin position="277"/>
        <end position="455"/>
    </location>
</feature>
<feature type="region of interest" description="Fusion peptide" evidence="1">
    <location>
        <begin position="529"/>
        <end position="549"/>
    </location>
</feature>
<feature type="compositionally biased region" description="Polar residues" evidence="5">
    <location>
        <begin position="236"/>
        <end position="260"/>
    </location>
</feature>
<feature type="compositionally biased region" description="Polar residues" evidence="5">
    <location>
        <begin position="278"/>
        <end position="315"/>
    </location>
</feature>
<feature type="compositionally biased region" description="Low complexity" evidence="5">
    <location>
        <begin position="327"/>
        <end position="347"/>
    </location>
</feature>
<feature type="compositionally biased region" description="Polar residues" evidence="5">
    <location>
        <begin position="348"/>
        <end position="365"/>
    </location>
</feature>
<feature type="compositionally biased region" description="Polar residues" evidence="5">
    <location>
        <begin position="373"/>
        <end position="394"/>
    </location>
</feature>
<feature type="compositionally biased region" description="Low complexity" evidence="5">
    <location>
        <begin position="395"/>
        <end position="428"/>
    </location>
</feature>
<feature type="site" description="Cleavage; by host furin" evidence="1">
    <location>
        <begin position="435"/>
        <end position="436"/>
    </location>
</feature>
<feature type="lipid moiety-binding region" description="S-palmitoyl cysteine; by host" evidence="2">
    <location>
        <position position="671"/>
    </location>
</feature>
<feature type="lipid moiety-binding region" description="S-palmitoyl cysteine; by host" evidence="2">
    <location>
        <position position="673"/>
    </location>
</feature>
<feature type="glycosylation site" description="N-linked (GlcNAc...) asparagine; by host" evidence="4">
    <location>
        <position position="94"/>
    </location>
</feature>
<feature type="glycosylation site" description="N-linked (GlcNAc...) asparagine; by host" evidence="4">
    <location>
        <position position="171"/>
    </location>
</feature>
<feature type="glycosylation site" description="N-linked (GlcNAc...) asparagine; by host" evidence="4">
    <location>
        <position position="190"/>
    </location>
</feature>
<feature type="glycosylation site" description="N-linked (GlcNAc...) asparagine; by host" evidence="4">
    <location>
        <position position="202"/>
    </location>
</feature>
<feature type="glycosylation site" description="N-linked (GlcNAc...) asparagine; by host" evidence="4">
    <location>
        <position position="207"/>
    </location>
</feature>
<feature type="glycosylation site" description="N-linked (GlcNAc...) asparagine; by host" evidence="4">
    <location>
        <position position="219"/>
    </location>
</feature>
<feature type="glycosylation site" description="N-linked (GlcNAc...) asparagine; by host" evidence="4">
    <location>
        <position position="223"/>
    </location>
</feature>
<feature type="glycosylation site" description="N-linked (GlcNAc...) asparagine; by host" evidence="4">
    <location>
        <position position="310"/>
    </location>
</feature>
<feature type="glycosylation site" description="N-linked (GlcNAc...) asparagine; by host" evidence="4">
    <location>
        <position position="323"/>
    </location>
</feature>
<feature type="glycosylation site" description="N-linked (GlcNAc...) asparagine; by host" evidence="4">
    <location>
        <position position="336"/>
    </location>
</feature>
<feature type="glycosylation site" description="N-linked (GlcNAc...) asparagine; by host" evidence="4">
    <location>
        <position position="350"/>
    </location>
</feature>
<feature type="glycosylation site" description="N-linked (GlcNAc...) asparagine; by host" evidence="4">
    <location>
        <position position="360"/>
    </location>
</feature>
<feature type="glycosylation site" description="N-linked (GlcNAc...) asparagine; by host" evidence="4">
    <location>
        <position position="364"/>
    </location>
</feature>
<feature type="glycosylation site" description="N-linked (GlcNAc...) asparagine; by host" evidence="4">
    <location>
        <position position="381"/>
    </location>
</feature>
<feature type="glycosylation site" description="N-linked (GlcNAc...) asparagine; by host" evidence="4">
    <location>
        <position position="397"/>
    </location>
</feature>
<feature type="glycosylation site" description="N-linked (GlcNAc...) asparagine; by host" evidence="4">
    <location>
        <position position="475"/>
    </location>
</feature>
<feature type="glycosylation site" description="N-linked (GlcNAc...) asparagine; by host" evidence="4">
    <location>
        <position position="487"/>
    </location>
</feature>
<feature type="glycosylation site" description="N-linked (GlcNAc...) asparagine; by host" evidence="4">
    <location>
        <position position="564"/>
    </location>
</feature>
<feature type="glycosylation site" description="N-linked (GlcNAc...) asparagine; by host" evidence="4">
    <location>
        <position position="619"/>
    </location>
</feature>
<feature type="helix" evidence="7">
    <location>
        <begin position="44"/>
        <end position="46"/>
    </location>
</feature>
<feature type="strand" evidence="7">
    <location>
        <begin position="47"/>
        <end position="54"/>
    </location>
</feature>
<feature type="helix" evidence="7">
    <location>
        <begin position="55"/>
        <end position="57"/>
    </location>
</feature>
<feature type="helix" evidence="7">
    <location>
        <begin position="63"/>
        <end position="66"/>
    </location>
</feature>
<feature type="helix" evidence="7">
    <location>
        <begin position="67"/>
        <end position="69"/>
    </location>
</feature>
<feature type="strand" evidence="7">
    <location>
        <begin position="70"/>
        <end position="75"/>
    </location>
</feature>
<feature type="strand" evidence="7">
    <location>
        <begin position="80"/>
        <end position="82"/>
    </location>
</feature>
<feature type="strand" evidence="7">
    <location>
        <begin position="84"/>
        <end position="87"/>
    </location>
</feature>
<feature type="strand" evidence="7">
    <location>
        <begin position="89"/>
        <end position="98"/>
    </location>
</feature>
<feature type="strand" evidence="7">
    <location>
        <begin position="104"/>
        <end position="107"/>
    </location>
</feature>
<feature type="strand" evidence="7">
    <location>
        <begin position="119"/>
        <end position="128"/>
    </location>
</feature>
<feature type="strand" evidence="7">
    <location>
        <begin position="134"/>
        <end position="138"/>
    </location>
</feature>
<feature type="strand" evidence="7">
    <location>
        <begin position="143"/>
        <end position="145"/>
    </location>
</feature>
<feature type="strand" evidence="7">
    <location>
        <begin position="147"/>
        <end position="153"/>
    </location>
</feature>
<feature type="strand" evidence="7">
    <location>
        <begin position="159"/>
        <end position="169"/>
    </location>
</feature>
<feature type="helix" evidence="7">
    <location>
        <begin position="172"/>
        <end position="179"/>
    </location>
</feature>
<feature type="strand" evidence="7">
    <location>
        <begin position="473"/>
        <end position="476"/>
    </location>
</feature>
<feature type="strand" evidence="7">
    <location>
        <begin position="490"/>
        <end position="492"/>
    </location>
</feature>
<feature type="strand" evidence="7">
    <location>
        <begin position="516"/>
        <end position="521"/>
    </location>
</feature>
<feature type="strand" evidence="7">
    <location>
        <begin position="525"/>
        <end position="530"/>
    </location>
</feature>
<feature type="turn" evidence="7">
    <location>
        <begin position="534"/>
        <end position="536"/>
    </location>
</feature>
<feature type="turn" evidence="7">
    <location>
        <begin position="540"/>
        <end position="542"/>
    </location>
</feature>
<feature type="strand" evidence="7">
    <location>
        <begin position="544"/>
        <end position="549"/>
    </location>
</feature>
<feature type="strand" evidence="7">
    <location>
        <begin position="552"/>
        <end position="554"/>
    </location>
</feature>
<feature type="helix" evidence="7">
    <location>
        <begin position="555"/>
        <end position="576"/>
    </location>
</feature>
<feature type="helix" evidence="7">
    <location>
        <begin position="585"/>
        <end position="598"/>
    </location>
</feature>
<feature type="helix" evidence="7">
    <location>
        <begin position="614"/>
        <end position="626"/>
    </location>
</feature>
<accession>Q1PDC7</accession>
<accession>O36429</accession>
<reference key="1">
    <citation type="journal article" date="1998" name="Virology">
        <title>Variation in the glycoprotein and VP35 genes of Marburg virus strains.</title>
        <authorList>
            <person name="Sanchez A."/>
            <person name="Trappier S.G."/>
            <person name="Stroeher U."/>
            <person name="Nichol S.T."/>
            <person name="Bowen M.D."/>
            <person name="Feldmann H."/>
        </authorList>
    </citation>
    <scope>NUCLEOTIDE SEQUENCE [GENOMIC RNA]</scope>
</reference>
<reference key="2">
    <citation type="journal article" date="2006" name="J. Virol.">
        <title>Marburgvirus genomics and association with a large hemorrhagic fever outbreak in Angola.</title>
        <authorList>
            <person name="Towner J.S."/>
            <person name="Khristova M.L."/>
            <person name="Sealy T.K."/>
            <person name="Vincent M.J."/>
            <person name="Erickson B.R."/>
            <person name="Bawiec D.A."/>
            <person name="Hartman A.L."/>
            <person name="Comer J.A."/>
            <person name="Zaki S.R."/>
            <person name="Stroeher U."/>
            <person name="Gomes da Silva F."/>
            <person name="del Castillo F."/>
            <person name="Rollin P.E."/>
            <person name="Ksiazek T.G."/>
            <person name="Nichol S.T."/>
        </authorList>
    </citation>
    <scope>NUCLEOTIDE SEQUENCE [GENOMIC RNA]</scope>
</reference>
<dbReference type="EMBL" id="AF005734">
    <property type="protein sequence ID" value="AAC40459.1"/>
    <property type="molecule type" value="Genomic_RNA"/>
</dbReference>
<dbReference type="EMBL" id="DQ447649">
    <property type="protein sequence ID" value="ABE27071.1"/>
    <property type="molecule type" value="Genomic_RNA"/>
</dbReference>
<dbReference type="PDB" id="5UQY">
    <property type="method" value="X-ray"/>
    <property type="resolution" value="3.60 A"/>
    <property type="chains" value="A/E/I/M=17-255, B/F/J/N=436-637"/>
</dbReference>
<dbReference type="PDB" id="6BP2">
    <property type="method" value="X-ray"/>
    <property type="resolution" value="3.17 A"/>
    <property type="chains" value="A=17-259, B=436-637"/>
</dbReference>
<dbReference type="PDBsum" id="5UQY"/>
<dbReference type="PDBsum" id="6BP2"/>
<dbReference type="SMR" id="Q1PDC7"/>
<dbReference type="TCDB" id="1.G.12.2.4">
    <property type="family name" value="the avian leukosis virus gp95 fusion protein (alv-gp95) family"/>
</dbReference>
<dbReference type="GlyCosmos" id="Q1PDC7">
    <property type="glycosylation" value="19 sites, No reported glycans"/>
</dbReference>
<dbReference type="ABCD" id="Q1PDC7">
    <property type="antibodies" value="2 sequenced antibodies"/>
</dbReference>
<dbReference type="KEGG" id="vg:20282644"/>
<dbReference type="Proteomes" id="UP000008239">
    <property type="component" value="Genome"/>
</dbReference>
<dbReference type="GO" id="GO:0020002">
    <property type="term" value="C:host cell plasma membrane"/>
    <property type="evidence" value="ECO:0007669"/>
    <property type="project" value="UniProtKB-SubCell"/>
</dbReference>
<dbReference type="GO" id="GO:0016020">
    <property type="term" value="C:membrane"/>
    <property type="evidence" value="ECO:0007669"/>
    <property type="project" value="UniProtKB-KW"/>
</dbReference>
<dbReference type="GO" id="GO:0019031">
    <property type="term" value="C:viral envelope"/>
    <property type="evidence" value="ECO:0007669"/>
    <property type="project" value="UniProtKB-KW"/>
</dbReference>
<dbReference type="GO" id="GO:0055036">
    <property type="term" value="C:virion membrane"/>
    <property type="evidence" value="ECO:0007669"/>
    <property type="project" value="UniProtKB-SubCell"/>
</dbReference>
<dbReference type="GO" id="GO:0039654">
    <property type="term" value="P:fusion of virus membrane with host endosome membrane"/>
    <property type="evidence" value="ECO:0007669"/>
    <property type="project" value="UniProtKB-KW"/>
</dbReference>
<dbReference type="GO" id="GO:0046718">
    <property type="term" value="P:symbiont entry into host cell"/>
    <property type="evidence" value="ECO:0007669"/>
    <property type="project" value="UniProtKB-KW"/>
</dbReference>
<dbReference type="GO" id="GO:0019062">
    <property type="term" value="P:virion attachment to host cell"/>
    <property type="evidence" value="ECO:0007669"/>
    <property type="project" value="UniProtKB-KW"/>
</dbReference>
<dbReference type="CDD" id="cd09850">
    <property type="entry name" value="Ebola-like_HR1-HR2"/>
    <property type="match status" value="1"/>
</dbReference>
<dbReference type="Gene3D" id="1.10.287.210">
    <property type="match status" value="1"/>
</dbReference>
<dbReference type="InterPro" id="IPR054584">
    <property type="entry name" value="Ebola-like_HR1-HR2"/>
</dbReference>
<dbReference type="InterPro" id="IPR014625">
    <property type="entry name" value="GPC_FiloV"/>
</dbReference>
<dbReference type="InterPro" id="IPR002561">
    <property type="entry name" value="GPC_filovir-type_extra_dom"/>
</dbReference>
<dbReference type="InterPro" id="IPR018154">
    <property type="entry name" value="TLV/ENV_coat_polyprotein"/>
</dbReference>
<dbReference type="PANTHER" id="PTHR10424:SF81">
    <property type="entry name" value="ERVV2 PROTEIN"/>
    <property type="match status" value="1"/>
</dbReference>
<dbReference type="PANTHER" id="PTHR10424">
    <property type="entry name" value="VIRAL ENVELOPE PROTEIN"/>
    <property type="match status" value="1"/>
</dbReference>
<dbReference type="Pfam" id="PF22307">
    <property type="entry name" value="Ebola-like_HR1-HR2"/>
    <property type="match status" value="1"/>
</dbReference>
<dbReference type="Pfam" id="PF01611">
    <property type="entry name" value="Filo_glycop"/>
    <property type="match status" value="1"/>
</dbReference>
<dbReference type="PIRSF" id="PIRSF036874">
    <property type="entry name" value="GPC_FiloV"/>
    <property type="match status" value="1"/>
</dbReference>
<dbReference type="SUPFAM" id="SSF58069">
    <property type="entry name" value="Virus ectodomain"/>
    <property type="match status" value="1"/>
</dbReference>
<keyword id="KW-0002">3D-structure</keyword>
<keyword id="KW-0165">Cleavage on pair of basic residues</keyword>
<keyword id="KW-1015">Disulfide bond</keyword>
<keyword id="KW-1170">Fusion of virus membrane with host endosomal membrane</keyword>
<keyword id="KW-1168">Fusion of virus membrane with host membrane</keyword>
<keyword id="KW-0325">Glycoprotein</keyword>
<keyword id="KW-1032">Host cell membrane</keyword>
<keyword id="KW-1043">Host membrane</keyword>
<keyword id="KW-0945">Host-virus interaction</keyword>
<keyword id="KW-0449">Lipoprotein</keyword>
<keyword id="KW-0472">Membrane</keyword>
<keyword id="KW-0564">Palmitate</keyword>
<keyword id="KW-0732">Signal</keyword>
<keyword id="KW-0812">Transmembrane</keyword>
<keyword id="KW-1133">Transmembrane helix</keyword>
<keyword id="KW-1161">Viral attachment to host cell</keyword>
<keyword id="KW-0261">Viral envelope protein</keyword>
<keyword id="KW-1162">Viral penetration into host cytoplasm</keyword>
<keyword id="KW-0946">Virion</keyword>
<keyword id="KW-1160">Virus entry into host cell</keyword>